<proteinExistence type="evidence at protein level"/>
<comment type="function">
    <text evidence="5 6 7 8">Beauvericin nonribosomal cyclodepsipeptide synthetase; part of the gene cluster that mediates the biosynthesis of beauvericin (BEA), a non-ribosomal cyclic hexadepsipeptide that shows antibiotic, antifungal, insecticidal, and cancer cell antiproliferative and antihaptotactic activity (PubMed:18804027, PubMed:28534477). Ketoisovalerate reductase BEA2 catalyzes the NADPH-specific reduction of ketoisovaleric acid to hydroxyisovalerate, a precursor for beauvericin biosynthesis (PubMed:19105175, PubMed:27449895). The nonribosomal cyclodepsipeptide synthetase BEA1 then catalyzes the formation of beauvericin via condensation and cyclization of 3 dipeptidol monomers, each composed of one unit of hydroxyisovalerate and one unit of N-methyl-phenylalanine (PubMed:18804027, PubMed:28534477).</text>
</comment>
<comment type="catalytic activity">
    <reaction evidence="5 8">
        <text>3 (R)-2-hydroxy-3-methylbutanoate + 3 L-phenylalanine + 3 S-adenosyl-L-methionine + 6 ATP = beauvericin + 6 AMP + 3 S-adenosyl-L-homocysteine + 6 diphosphate + 6 H(+)</text>
        <dbReference type="Rhea" id="RHEA:62276"/>
        <dbReference type="ChEBI" id="CHEBI:3000"/>
        <dbReference type="ChEBI" id="CHEBI:15378"/>
        <dbReference type="ChEBI" id="CHEBI:30616"/>
        <dbReference type="ChEBI" id="CHEBI:33019"/>
        <dbReference type="ChEBI" id="CHEBI:57856"/>
        <dbReference type="ChEBI" id="CHEBI:58095"/>
        <dbReference type="ChEBI" id="CHEBI:59789"/>
        <dbReference type="ChEBI" id="CHEBI:145660"/>
        <dbReference type="ChEBI" id="CHEBI:456215"/>
    </reaction>
    <physiologicalReaction direction="left-to-right" evidence="5 8">
        <dbReference type="Rhea" id="RHEA:62277"/>
    </physiologicalReaction>
</comment>
<comment type="domain">
    <text>NRP synthetases are composed of discrete domains (adenylation (A), thiolation (T) or peptidyl carrier protein (PCP) and condensation (C) domains) which when grouped together are referred to as a single module. Each module is responsible for the recognition (via the A domain) and incorporation of a single amino acid into the growing peptide product. Thus, an NRP synthetase is generally composed of one or more modules and can terminate in a thioesterase domain (TE) that releases the newly synthesized peptide from the enzyme. Occasionally, additional domains required for further modifications are also present. Beauvericin synthetase has the C1-A1-T1-C2-A2-MT-T2a-T2b-C3 domain organization (PubMed:18804027, PubMed:28534477). During catalysis, C3 and C2 take turns to incorporate the two biosynthetic precursors into the growing depsipeptide chain that swings between T1 and T2a/T2b with C3 cyclizing the chain when it reaches the full length (PubMed:28534477).</text>
</comment>
<comment type="disruption phenotype">
    <text evidence="5">Impairs the production of beauvericin (PubMed:18804027).</text>
</comment>
<comment type="similarity">
    <text evidence="10">Belongs to the NRP synthetase family.</text>
</comment>
<keyword id="KW-0413">Isomerase</keyword>
<keyword id="KW-0436">Ligase</keyword>
<keyword id="KW-0489">Methyltransferase</keyword>
<keyword id="KW-0511">Multifunctional enzyme</keyword>
<keyword id="KW-0596">Phosphopantetheine</keyword>
<keyword id="KW-0597">Phosphoprotein</keyword>
<keyword id="KW-0677">Repeat</keyword>
<keyword id="KW-0949">S-adenosyl-L-methionine</keyword>
<keyword id="KW-0808">Transferase</keyword>
<sequence length="3189" mass="351910">MEPLKNVNTGQPCSTVPFPVSDETVEHLNGLYEEINRRFGLDRDAIETILPCTPFQYDVLDCAANDARHAVGHAMYEISQHVHVQRFIAAWRETVRRTPALRACTFTSTTGESFQLVLRESFVLSRIYWSSSSSLQAAVLKDETTAAIAGPRCNRLVLLEDPDTRKQLLIWVFHLALVDSTVQEPILRRVLAAYKSEDDQLDSLPLTPDSSGGSDSDSPSTLKMPRAFDQEKATQFWQRQLSGLDASVFPPLSSHLTTPKADAKIEHYISWPASAAQHRWSSTTVCQAALAVLLSRYSHSSEALFGVVTEQVCMFEGQRLLINGPTRSVVPFRVHCGPEQSVTDLLKSIASDNHDMRQFAHVGLCNISRIGDDQSAACRFQTVLSVSNRRSSEDAASGEVLQILQESEGFAPCADRALLLRCETSRQGALLVARYDQGVIEPPQMARFLRQLGWLMEQLQSAADDALSVKQLDIVTREDRAEIDSWNSDALEVQESLLHSAFVKRAAESPSDPAVLSWDGAWTYSELDNVSSRLAAHIRSLDLSHEQLIVPVYFEKSKWVVASILAVLKAGHAFTLIDPKDPPARTTRIVQQTSAKVALTSKLHQDTVQAIIGRCIVVDDDFVQSLGSASQCQEKSELTVKPHNLAYAIFTSGSTGDPKGIMIEHQAFASCVAKFGPALIPHNARALQFASHGFGACLLEILPTLLRGGCVCIPSDLDRMHNIPDFIRRYNVNWMMATPSYMTTFKPEDVPGLQTLILVGEQMSASVNATWASRLGLFDGYGQSESCSICFIGKISPVSEANNIGRAVGAHSWIVHPDDPDRLAPVGAVGELLIESPGIARGYIAAPATDRNPFLETAPAWYAPRQPPTGVKFYRTGDLARYAADGTVVCLGRIDSQVKIRGQRVEMGAVETRLRQQVPSDITVVAEAVKRSGSSGSTVITAFLIDSSDKNNSSAASAKDARILDQTATQEMNAKLCQVLPPHSVPSCYICMHALPRTATGKVDRKTLRSIGSKLLEQQAYKKSPETMQKSKSAETLETGPEARLKEVWLQSFNLEPASPKCGASFFELGGDSITAIKMVNMARAAGLELKVSDIFQNPTLARLQAVMSGDSTPSTITTPFATIPASTWDGPVEQSYSQGRLWFLDQLDIGAVWYLIPYAVRMRGALNIDALRAALLALEQRHETLRTTFENQNGVGVQIVHQRLAKELKIIDASSHGDDGYLQPLEQEQTTPFDLTCEAGWRASLICVGEDHHVLSIVMHHIVSDGWSIDVLRQELGQLYAAVLHGDEDPLSAVSPLPIQYRDFSMWQRRQQVAEHDRQLQYWRKQLADCSPAKLPTDFPRPPLLSGDAGSVPVEISGELFQKLHRFCNVTSTTPFAVLLAAFRAAHYRLTGVDDAVVGTPIANRNRPELERLIGFFVNTQCMRITVDDDDTFEGLVRQVRRTTTEAFENEDVPFERVVSAMLPAGGGSRDLSQTPLAQLIFAVHSQENLGKFELEGLESEPVANKAYTRFDAEFHLFQTRDGLNGYLNFAAELFKLETMQNVVSVFLQILRHGLEQPKSLISVLPLTDGLKELDSMGLLKIHRGLEYQRDSSLVDIFRSQVATCPDTIAVIDSSARLTYAQLDHQSNLLEAWIRRKGLPAESLVGVLSPRSCETIIAFLGILKANLAYLPLDPKSPVSRMRDVLSDLPGHTIILLGSDVAAPDLELPCLELVRISDALKSGASAVNGSETTDLSAPSANSLAYVLYTSGSTGRPKGVMVEHRAIVRLVQRGVIPNFPPLRGAIMAHLFNTVFDGATYEIFLMLLNGGTLVCIDYLTTLSPKALETVFLREGINCAIMTPALLKLYLANARDGLKGLDMLMVAGDRFDPQDAVEAQTLVRGDCYNAYGPTENGVMSTLYKIDTSDSFINGVPLGRAIDNSGAYITDPNQQLVGPGVLGELIVTGDGLARGYTDPALDRDRFVQVVINGESVRAYRTGDRMRYRAGQDCLFEFFGRMDFQFKIRSNRIESAEVEAAILSHPLVRDAAIVVVGVQEEQEPEMVGFVVAADDAVEQEATDNQVEGWQELFESSMYNGIDAISPSALGKDFTGWTSMYDGSEIDKSEMQEWLDDTIHTLRDGHVPGHVLEIGTGTGMILFNLGSVESYVGLEPTKSAVEFVNKAIKTLPNLAGRAEVHTGTATDIDQLSGLRPDLVILNSVVQYFPTVEYLTRVVDALVRIRGVKRLFFGDVRSQALHRQFLAACAMHALGKTATRDDVRRYMAEREEREEELLVEPAFFTALMNRHPNLIQHVEILPKNIRATNELSAYRYAAVVHLRDPESAARPVYPIAADDWVDFQASQMRSDVLREYLRLSAGADTVAVCNIPYEKTIFERLIVESLDDNTGSDAPQSRLHGRSLDGAPWISAVRSDAESRASLSVPDLVQLAAESGFQVQVSAARQWSQSGALDAVFHRRHASSSQPTMRTLFQFPDDNALRASATLTNRPLQRLQRRRVAAQIRERLQTLVPSYMIPAKIVVLDQMPLNANGKVDRKELARRARTTTMTKKKKPQRLASEPACPISDIEVALCEEATATFGMQVGISDHFFKLGGHSLLATKLISRVGDRLKARLTVKDVFDHPIFSELAIVIREGLQNVVPVALNGGGQAKQGSAGVVAPRNEMETMLCEEFANVLGMDVGVTDNFFDLGGHSLMATKLAARIGRRLNTTISVKEVFEHPIVFQLANSLELGQLESDRVKHTMLADYTAFQLLSVEDLQGFLQNEISPQLECAHGGIQDVYPATHMQKAFLCDASTGHPKPLVPFYIDFPPDSDCSTLVEACSSLVKRFDMFRTVVVEAAGELYQVVLEHFDLQIDVVETEENVHAATNDFVDRILEVPVHLGQPLIQFTILKQASSVRVLLCLSHALYDGLSLEHVVRDLHMLYKGRSLLPANQFSRYMQYMDHTRKAGCDFWRDVIQDTPITVLGHVDAGGRELEVEAARTLHATKIISIPLQAVRSSIITQATVFNAACALVLSRETGAKDVVFGRIVSGRQGLPVSWQNIVGPCTNAVPVRARIIDDDDDNHRQMLRDMQDQYLLSLPFETLDFDEVRRSCTNWPATANNYACCVTYHDFSYHPESEMEQQRVEMGVLARKDALLKEEPVYDLGIAGEVEPDGVHLQVTVVAKTRLFSEERAAYLMEEVCRLFESLNSAL</sequence>
<accession>B6D9A8</accession>
<name>BEA1_BEABA</name>
<dbReference type="EC" id="6.1.2.-" evidence="5 8"/>
<dbReference type="EC" id="2.1.1.-" evidence="5"/>
<dbReference type="EMBL" id="EU886196">
    <property type="protein sequence ID" value="ACI30655.1"/>
    <property type="molecule type" value="Genomic_DNA"/>
</dbReference>
<dbReference type="SMR" id="B6D9A8"/>
<dbReference type="GO" id="GO:0005737">
    <property type="term" value="C:cytoplasm"/>
    <property type="evidence" value="ECO:0007669"/>
    <property type="project" value="TreeGrafter"/>
</dbReference>
<dbReference type="GO" id="GO:0016853">
    <property type="term" value="F:isomerase activity"/>
    <property type="evidence" value="ECO:0007669"/>
    <property type="project" value="UniProtKB-KW"/>
</dbReference>
<dbReference type="GO" id="GO:0016874">
    <property type="term" value="F:ligase activity"/>
    <property type="evidence" value="ECO:0007669"/>
    <property type="project" value="UniProtKB-KW"/>
</dbReference>
<dbReference type="GO" id="GO:0008168">
    <property type="term" value="F:methyltransferase activity"/>
    <property type="evidence" value="ECO:0007669"/>
    <property type="project" value="UniProtKB-KW"/>
</dbReference>
<dbReference type="GO" id="GO:0031177">
    <property type="term" value="F:phosphopantetheine binding"/>
    <property type="evidence" value="ECO:0007669"/>
    <property type="project" value="InterPro"/>
</dbReference>
<dbReference type="GO" id="GO:0043041">
    <property type="term" value="P:amino acid activation for nonribosomal peptide biosynthetic process"/>
    <property type="evidence" value="ECO:0007669"/>
    <property type="project" value="TreeGrafter"/>
</dbReference>
<dbReference type="GO" id="GO:0032259">
    <property type="term" value="P:methylation"/>
    <property type="evidence" value="ECO:0007669"/>
    <property type="project" value="UniProtKB-KW"/>
</dbReference>
<dbReference type="GO" id="GO:0044550">
    <property type="term" value="P:secondary metabolite biosynthetic process"/>
    <property type="evidence" value="ECO:0007669"/>
    <property type="project" value="TreeGrafter"/>
</dbReference>
<dbReference type="CDD" id="cd05930">
    <property type="entry name" value="A_NRPS"/>
    <property type="match status" value="1"/>
</dbReference>
<dbReference type="CDD" id="cd05918">
    <property type="entry name" value="A_NRPS_SidN3_like"/>
    <property type="match status" value="1"/>
</dbReference>
<dbReference type="CDD" id="cd02440">
    <property type="entry name" value="AdoMet_MTases"/>
    <property type="match status" value="1"/>
</dbReference>
<dbReference type="CDD" id="cd19542">
    <property type="entry name" value="CT_NRPS-like"/>
    <property type="match status" value="1"/>
</dbReference>
<dbReference type="CDD" id="cd19545">
    <property type="entry name" value="FUM14_C_NRPS-like"/>
    <property type="match status" value="1"/>
</dbReference>
<dbReference type="CDD" id="cd19531">
    <property type="entry name" value="LCL_NRPS-like"/>
    <property type="match status" value="1"/>
</dbReference>
<dbReference type="FunFam" id="3.30.300.30:FF:000084">
    <property type="entry name" value="Enniatin synthase"/>
    <property type="match status" value="1"/>
</dbReference>
<dbReference type="FunFam" id="3.30.300.30:FF:000015">
    <property type="entry name" value="Nonribosomal peptide synthase SidD"/>
    <property type="match status" value="1"/>
</dbReference>
<dbReference type="Gene3D" id="3.30.300.30">
    <property type="match status" value="3"/>
</dbReference>
<dbReference type="Gene3D" id="3.40.50.980">
    <property type="match status" value="2"/>
</dbReference>
<dbReference type="Gene3D" id="1.10.1200.10">
    <property type="entry name" value="ACP-like"/>
    <property type="match status" value="3"/>
</dbReference>
<dbReference type="Gene3D" id="3.30.559.10">
    <property type="entry name" value="Chloramphenicol acetyltransferase-like domain"/>
    <property type="match status" value="3"/>
</dbReference>
<dbReference type="Gene3D" id="2.30.38.10">
    <property type="entry name" value="Luciferase, Domain 3"/>
    <property type="match status" value="1"/>
</dbReference>
<dbReference type="Gene3D" id="3.40.50.12780">
    <property type="entry name" value="N-terminal domain of ligase-like"/>
    <property type="match status" value="1"/>
</dbReference>
<dbReference type="Gene3D" id="3.30.559.30">
    <property type="entry name" value="Nonribosomal peptide synthetase, condensation domain"/>
    <property type="match status" value="3"/>
</dbReference>
<dbReference type="Gene3D" id="3.40.50.150">
    <property type="entry name" value="Vaccinia Virus protein VP39"/>
    <property type="match status" value="1"/>
</dbReference>
<dbReference type="InterPro" id="IPR010071">
    <property type="entry name" value="AA_adenyl_dom"/>
</dbReference>
<dbReference type="InterPro" id="IPR036736">
    <property type="entry name" value="ACP-like_sf"/>
</dbReference>
<dbReference type="InterPro" id="IPR045851">
    <property type="entry name" value="AMP-bd_C_sf"/>
</dbReference>
<dbReference type="InterPro" id="IPR020845">
    <property type="entry name" value="AMP-binding_CS"/>
</dbReference>
<dbReference type="InterPro" id="IPR000873">
    <property type="entry name" value="AMP-dep_synth/lig_dom"/>
</dbReference>
<dbReference type="InterPro" id="IPR042099">
    <property type="entry name" value="ANL_N_sf"/>
</dbReference>
<dbReference type="InterPro" id="IPR023213">
    <property type="entry name" value="CAT-like_dom_sf"/>
</dbReference>
<dbReference type="InterPro" id="IPR001242">
    <property type="entry name" value="Condensatn"/>
</dbReference>
<dbReference type="InterPro" id="IPR020806">
    <property type="entry name" value="PKS_PP-bd"/>
</dbReference>
<dbReference type="InterPro" id="IPR009081">
    <property type="entry name" value="PP-bd_ACP"/>
</dbReference>
<dbReference type="InterPro" id="IPR006162">
    <property type="entry name" value="Ppantetheine_attach_site"/>
</dbReference>
<dbReference type="InterPro" id="IPR029063">
    <property type="entry name" value="SAM-dependent_MTases_sf"/>
</dbReference>
<dbReference type="NCBIfam" id="TIGR01733">
    <property type="entry name" value="AA-adenyl-dom"/>
    <property type="match status" value="1"/>
</dbReference>
<dbReference type="PANTHER" id="PTHR45527:SF1">
    <property type="entry name" value="FATTY ACID SYNTHASE"/>
    <property type="match status" value="1"/>
</dbReference>
<dbReference type="PANTHER" id="PTHR45527">
    <property type="entry name" value="NONRIBOSOMAL PEPTIDE SYNTHETASE"/>
    <property type="match status" value="1"/>
</dbReference>
<dbReference type="Pfam" id="PF00501">
    <property type="entry name" value="AMP-binding"/>
    <property type="match status" value="2"/>
</dbReference>
<dbReference type="Pfam" id="PF00668">
    <property type="entry name" value="Condensation"/>
    <property type="match status" value="3"/>
</dbReference>
<dbReference type="Pfam" id="PF00550">
    <property type="entry name" value="PP-binding"/>
    <property type="match status" value="3"/>
</dbReference>
<dbReference type="SMART" id="SM00823">
    <property type="entry name" value="PKS_PP"/>
    <property type="match status" value="3"/>
</dbReference>
<dbReference type="SUPFAM" id="SSF56801">
    <property type="entry name" value="Acetyl-CoA synthetase-like"/>
    <property type="match status" value="2"/>
</dbReference>
<dbReference type="SUPFAM" id="SSF47336">
    <property type="entry name" value="ACP-like"/>
    <property type="match status" value="3"/>
</dbReference>
<dbReference type="SUPFAM" id="SSF52777">
    <property type="entry name" value="CoA-dependent acyltransferases"/>
    <property type="match status" value="6"/>
</dbReference>
<dbReference type="SUPFAM" id="SSF53335">
    <property type="entry name" value="S-adenosyl-L-methionine-dependent methyltransferases"/>
    <property type="match status" value="1"/>
</dbReference>
<dbReference type="PROSITE" id="PS00455">
    <property type="entry name" value="AMP_BINDING"/>
    <property type="match status" value="1"/>
</dbReference>
<dbReference type="PROSITE" id="PS50075">
    <property type="entry name" value="CARRIER"/>
    <property type="match status" value="3"/>
</dbReference>
<dbReference type="PROSITE" id="PS00012">
    <property type="entry name" value="PHOSPHOPANTETHEINE"/>
    <property type="match status" value="3"/>
</dbReference>
<organism>
    <name type="scientific">Beauveria bassiana</name>
    <name type="common">White muscardine disease fungus</name>
    <name type="synonym">Tritirachium shiotae</name>
    <dbReference type="NCBI Taxonomy" id="176275"/>
    <lineage>
        <taxon>Eukaryota</taxon>
        <taxon>Fungi</taxon>
        <taxon>Dikarya</taxon>
        <taxon>Ascomycota</taxon>
        <taxon>Pezizomycotina</taxon>
        <taxon>Sordariomycetes</taxon>
        <taxon>Hypocreomycetidae</taxon>
        <taxon>Hypocreales</taxon>
        <taxon>Cordycipitaceae</taxon>
        <taxon>Beauveria</taxon>
    </lineage>
</organism>
<feature type="chain" id="PRO_0000442146" description="Beauvericin nonribosomal cyclodepsipeptide synthetase">
    <location>
        <begin position="1"/>
        <end position="3189"/>
    </location>
</feature>
<feature type="domain" description="Carrier 1" evidence="3">
    <location>
        <begin position="1036"/>
        <end position="1112"/>
    </location>
</feature>
<feature type="domain" description="Carrier 2" evidence="3">
    <location>
        <begin position="2557"/>
        <end position="2631"/>
    </location>
</feature>
<feature type="domain" description="Carrier 3" evidence="3">
    <location>
        <begin position="2654"/>
        <end position="2728"/>
    </location>
</feature>
<feature type="region of interest" description="Condensation 1" evidence="1 2">
    <location>
        <begin position="73"/>
        <end position="466"/>
    </location>
</feature>
<feature type="region of interest" description="Disordered" evidence="4">
    <location>
        <begin position="202"/>
        <end position="223"/>
    </location>
</feature>
<feature type="region of interest" description="Adenylation 1" evidence="1 2">
    <location>
        <begin position="507"/>
        <end position="901"/>
    </location>
</feature>
<feature type="region of interest" description="Condensation 2" evidence="1 2">
    <location>
        <begin position="1136"/>
        <end position="1569"/>
    </location>
</feature>
<feature type="region of interest" description="Adenylation 2" evidence="1 2">
    <location>
        <begin position="1599"/>
        <end position="2004"/>
    </location>
</feature>
<feature type="region of interest" description="S-adenosyl-L-methionine-dependent N-methyltransferase" evidence="1 2">
    <location>
        <begin position="2072"/>
        <end position="2211"/>
    </location>
</feature>
<feature type="region of interest" description="Condensation 3" evidence="1 2">
    <location>
        <begin position="2773"/>
        <end position="3181"/>
    </location>
</feature>
<feature type="compositionally biased region" description="Low complexity" evidence="4">
    <location>
        <begin position="208"/>
        <end position="220"/>
    </location>
</feature>
<feature type="modified residue" description="O-(pantetheine 4'-phosphoryl)serine" evidence="3">
    <location>
        <position position="1073"/>
    </location>
</feature>
<feature type="modified residue" description="O-(pantetheine 4'-phosphoryl)serine" evidence="3">
    <location>
        <position position="2591"/>
    </location>
</feature>
<feature type="modified residue" description="O-(pantetheine 4'-phosphoryl)serine" evidence="3">
    <location>
        <position position="2688"/>
    </location>
</feature>
<gene>
    <name type="primary">Beas</name>
</gene>
<reference key="1">
    <citation type="journal article" date="2008" name="Chem. Biol.">
        <title>Biosynthesis of the cyclooligomer depsipeptide beauvericin, a virulence factor of the entomopathogenic fungus Beauveria bassiana.</title>
        <authorList>
            <person name="Xu Y."/>
            <person name="Orozco R."/>
            <person name="Kithsiri Wijeratne E.M."/>
            <person name="Leslie Gunatilaka A.A."/>
            <person name="Stock S.P."/>
            <person name="Molnar I."/>
        </authorList>
    </citation>
    <scope>NUCLEOTIDE SEQUENCE [GENOMIC DNA]</scope>
    <scope>DOMAIN</scope>
    <scope>FUNCTION</scope>
    <scope>CATALYTIC ACTIVITY</scope>
    <scope>DISRUPTION PHENOTYPE</scope>
    <source>
        <strain>ATCC 7159</strain>
    </source>
</reference>
<reference key="2">
    <citation type="journal article" date="2009" name="ChemBioChem">
        <title>Combinatorial mutasynthesis of scrambled beauvericins, cyclooligomer depsipeptide cell migration inhibitors from Beauveria bassiana.</title>
        <authorList>
            <person name="Xu Y."/>
            <person name="Wijeratne E.M."/>
            <person name="Espinosa-Artiles P."/>
            <person name="Gunatilaka A.A."/>
            <person name="Molnar I."/>
        </authorList>
    </citation>
    <scope>FUNCTION</scope>
</reference>
<reference key="3">
    <citation type="journal article" date="2016" name="Environ. Microbiol.">
        <title>Calmodulin-mediated suppression of 2-ketoisovalerate reductase in Beauveria bassiana beauvericin biosynthetic pathway.</title>
        <authorList>
            <person name="Kim J."/>
            <person name="Yoon D.H."/>
            <person name="Oh J."/>
            <person name="Hyun M.W."/>
            <person name="Han J.G."/>
            <person name="Sung G.H."/>
        </authorList>
    </citation>
    <scope>FUNCTION</scope>
</reference>
<reference key="4">
    <citation type="journal article" date="2017" name="Nat. Commun.">
        <title>Decoding and reprogramming fungal iterative nonribosomal peptide synthetases.</title>
        <authorList>
            <person name="Yu D."/>
            <person name="Xu F."/>
            <person name="Zhang S."/>
            <person name="Zhan J."/>
        </authorList>
    </citation>
    <scope>FUNCTION</scope>
    <scope>DOMAIN</scope>
    <scope>CATALYTIC ACTIVITY</scope>
</reference>
<evidence type="ECO:0000250" key="1">
    <source>
        <dbReference type="UniProtKB" id="S0EN43"/>
    </source>
</evidence>
<evidence type="ECO:0000255" key="2"/>
<evidence type="ECO:0000255" key="3">
    <source>
        <dbReference type="PROSITE-ProRule" id="PRU00258"/>
    </source>
</evidence>
<evidence type="ECO:0000256" key="4">
    <source>
        <dbReference type="SAM" id="MobiDB-lite"/>
    </source>
</evidence>
<evidence type="ECO:0000269" key="5">
    <source>
    </source>
</evidence>
<evidence type="ECO:0000269" key="6">
    <source>
    </source>
</evidence>
<evidence type="ECO:0000269" key="7">
    <source>
    </source>
</evidence>
<evidence type="ECO:0000269" key="8">
    <source>
    </source>
</evidence>
<evidence type="ECO:0000303" key="9">
    <source>
    </source>
</evidence>
<evidence type="ECO:0000305" key="10"/>
<protein>
    <recommendedName>
        <fullName evidence="9">Beauvericin nonribosomal cyclodepsipeptide synthetase</fullName>
        <shortName evidence="9">BEAS</shortName>
    </recommendedName>
    <domain>
        <recommendedName>
            <fullName evidence="9">Nonribosomal peptide synthetase</fullName>
            <ecNumber evidence="5 8">6.1.2.-</ecNumber>
        </recommendedName>
    </domain>
    <domain>
        <recommendedName>
            <fullName evidence="9">S-adenosyl-L-methionine-dependent N-methyltransferase</fullName>
            <ecNumber evidence="5">2.1.1.-</ecNumber>
        </recommendedName>
    </domain>
</protein>